<keyword id="KW-0378">Hydrolase</keyword>
<protein>
    <recommendedName>
        <fullName evidence="1">Deoxyguanosinetriphosphate triphosphohydrolase-like protein</fullName>
    </recommendedName>
</protein>
<accession>B2UEG8</accession>
<evidence type="ECO:0000255" key="1">
    <source>
        <dbReference type="HAMAP-Rule" id="MF_01212"/>
    </source>
</evidence>
<evidence type="ECO:0000255" key="2">
    <source>
        <dbReference type="PROSITE-ProRule" id="PRU01175"/>
    </source>
</evidence>
<evidence type="ECO:0000256" key="3">
    <source>
        <dbReference type="SAM" id="MobiDB-lite"/>
    </source>
</evidence>
<name>DGTL1_RALPJ</name>
<organism>
    <name type="scientific">Ralstonia pickettii (strain 12J)</name>
    <dbReference type="NCBI Taxonomy" id="402626"/>
    <lineage>
        <taxon>Bacteria</taxon>
        <taxon>Pseudomonadati</taxon>
        <taxon>Pseudomonadota</taxon>
        <taxon>Betaproteobacteria</taxon>
        <taxon>Burkholderiales</taxon>
        <taxon>Burkholderiaceae</taxon>
        <taxon>Ralstonia</taxon>
    </lineage>
</organism>
<feature type="chain" id="PRO_1000138923" description="Deoxyguanosinetriphosphate triphosphohydrolase-like protein">
    <location>
        <begin position="1"/>
        <end position="388"/>
    </location>
</feature>
<feature type="domain" description="HD" evidence="2">
    <location>
        <begin position="78"/>
        <end position="209"/>
    </location>
</feature>
<feature type="region of interest" description="Disordered" evidence="3">
    <location>
        <begin position="24"/>
        <end position="44"/>
    </location>
</feature>
<comment type="similarity">
    <text evidence="1">Belongs to the dGTPase family. Type 2 subfamily.</text>
</comment>
<gene>
    <name type="ordered locus">Rpic_3246</name>
</gene>
<reference key="1">
    <citation type="submission" date="2008-05" db="EMBL/GenBank/DDBJ databases">
        <title>Complete sequence of chromosome 1 of Ralstonia pickettii 12J.</title>
        <authorList>
            <person name="Lucas S."/>
            <person name="Copeland A."/>
            <person name="Lapidus A."/>
            <person name="Glavina del Rio T."/>
            <person name="Dalin E."/>
            <person name="Tice H."/>
            <person name="Bruce D."/>
            <person name="Goodwin L."/>
            <person name="Pitluck S."/>
            <person name="Meincke L."/>
            <person name="Brettin T."/>
            <person name="Detter J.C."/>
            <person name="Han C."/>
            <person name="Kuske C.R."/>
            <person name="Schmutz J."/>
            <person name="Larimer F."/>
            <person name="Land M."/>
            <person name="Hauser L."/>
            <person name="Kyrpides N."/>
            <person name="Mikhailova N."/>
            <person name="Marsh T."/>
            <person name="Richardson P."/>
        </authorList>
    </citation>
    <scope>NUCLEOTIDE SEQUENCE [LARGE SCALE GENOMIC DNA]</scope>
    <source>
        <strain>12J</strain>
    </source>
</reference>
<sequence length="388" mass="44123">MNDRFDLPSAPFDLEGPLAPYAAHSAQTRGRVHAEPPSTSRTEFQRDRDRIIHSTAFRRLEYKTQVFVNHEGDLFRTRLTHSLEVAQIARSIARSLRLNEDLVEAVSLAHDLGHTPFGHAGQDALNDCMKPYGGFEHNLQSLLVVDRLEERYGGFDGLNLTFETREGILKHCSRNNAATLGDLGRRFLEGQQPSLEAQLANLADEVAYNNHDIDDGLRSGLITLEQLEDVPLWAIHRREAEAAFPAVSGRRLINETIRRIINALIVDLIGTTRAGIAEFAPQCIDDVRAAPALVAFSEPMHEEARVLKRFLFDNLYRHYLVMRMSAKARRIIDDLFRVFMDDPRLLPPQYQAKSNPDEQPRWIAHYIAGMTDRYAIKEHRRIFAVDAV</sequence>
<proteinExistence type="inferred from homology"/>
<dbReference type="EMBL" id="CP001068">
    <property type="protein sequence ID" value="ACD28368.1"/>
    <property type="molecule type" value="Genomic_DNA"/>
</dbReference>
<dbReference type="SMR" id="B2UEG8"/>
<dbReference type="STRING" id="402626.Rpic_3246"/>
<dbReference type="KEGG" id="rpi:Rpic_3246"/>
<dbReference type="PATRIC" id="fig|402626.5.peg.4380"/>
<dbReference type="eggNOG" id="COG0232">
    <property type="taxonomic scope" value="Bacteria"/>
</dbReference>
<dbReference type="HOGENOM" id="CLU_028163_1_0_4"/>
<dbReference type="GO" id="GO:0008832">
    <property type="term" value="F:dGTPase activity"/>
    <property type="evidence" value="ECO:0007669"/>
    <property type="project" value="TreeGrafter"/>
</dbReference>
<dbReference type="GO" id="GO:0006203">
    <property type="term" value="P:dGTP catabolic process"/>
    <property type="evidence" value="ECO:0007669"/>
    <property type="project" value="TreeGrafter"/>
</dbReference>
<dbReference type="CDD" id="cd00077">
    <property type="entry name" value="HDc"/>
    <property type="match status" value="1"/>
</dbReference>
<dbReference type="FunFam" id="1.10.3210.10:FF:000024">
    <property type="entry name" value="Deoxyguanosinetriphosphate triphosphohydrolase-like protein"/>
    <property type="match status" value="1"/>
</dbReference>
<dbReference type="Gene3D" id="1.10.3210.10">
    <property type="entry name" value="Hypothetical protein af1432"/>
    <property type="match status" value="1"/>
</dbReference>
<dbReference type="HAMAP" id="MF_01212">
    <property type="entry name" value="dGTPase_type2"/>
    <property type="match status" value="1"/>
</dbReference>
<dbReference type="InterPro" id="IPR006261">
    <property type="entry name" value="dGTPase"/>
</dbReference>
<dbReference type="InterPro" id="IPR050135">
    <property type="entry name" value="dGTPase-like"/>
</dbReference>
<dbReference type="InterPro" id="IPR023023">
    <property type="entry name" value="dNTPase_2"/>
</dbReference>
<dbReference type="InterPro" id="IPR003607">
    <property type="entry name" value="HD/PDEase_dom"/>
</dbReference>
<dbReference type="InterPro" id="IPR006674">
    <property type="entry name" value="HD_domain"/>
</dbReference>
<dbReference type="InterPro" id="IPR026875">
    <property type="entry name" value="PHydrolase_assoc_dom"/>
</dbReference>
<dbReference type="NCBIfam" id="TIGR01353">
    <property type="entry name" value="dGTP_triPase"/>
    <property type="match status" value="1"/>
</dbReference>
<dbReference type="NCBIfam" id="NF002326">
    <property type="entry name" value="PRK01286.1-1"/>
    <property type="match status" value="1"/>
</dbReference>
<dbReference type="PANTHER" id="PTHR11373:SF43">
    <property type="entry name" value="DEOXYGUANOSINETRIPHOSPHATE TRIPHOSPHOHYDROLASE-LIKE PROTEIN"/>
    <property type="match status" value="1"/>
</dbReference>
<dbReference type="PANTHER" id="PTHR11373">
    <property type="entry name" value="DEOXYNUCLEOSIDE TRIPHOSPHATE TRIPHOSPHOHYDROLASE"/>
    <property type="match status" value="1"/>
</dbReference>
<dbReference type="Pfam" id="PF01966">
    <property type="entry name" value="HD"/>
    <property type="match status" value="1"/>
</dbReference>
<dbReference type="Pfam" id="PF13286">
    <property type="entry name" value="HD_assoc"/>
    <property type="match status" value="1"/>
</dbReference>
<dbReference type="SMART" id="SM00471">
    <property type="entry name" value="HDc"/>
    <property type="match status" value="1"/>
</dbReference>
<dbReference type="SUPFAM" id="SSF109604">
    <property type="entry name" value="HD-domain/PDEase-like"/>
    <property type="match status" value="1"/>
</dbReference>
<dbReference type="PROSITE" id="PS51831">
    <property type="entry name" value="HD"/>
    <property type="match status" value="1"/>
</dbReference>